<name>COBT_SHESM</name>
<evidence type="ECO:0000255" key="1">
    <source>
        <dbReference type="HAMAP-Rule" id="MF_00230"/>
    </source>
</evidence>
<feature type="chain" id="PRO_1000021631" description="Nicotinate-nucleotide--dimethylbenzimidazole phosphoribosyltransferase">
    <location>
        <begin position="1"/>
        <end position="350"/>
    </location>
</feature>
<feature type="active site" description="Proton acceptor" evidence="1">
    <location>
        <position position="317"/>
    </location>
</feature>
<protein>
    <recommendedName>
        <fullName evidence="1">Nicotinate-nucleotide--dimethylbenzimidazole phosphoribosyltransferase</fullName>
        <shortName evidence="1">NN:DBI PRT</shortName>
        <ecNumber evidence="1">2.4.2.21</ecNumber>
    </recommendedName>
    <alternativeName>
        <fullName evidence="1">N(1)-alpha-phosphoribosyltransferase</fullName>
    </alternativeName>
</protein>
<proteinExistence type="inferred from homology"/>
<dbReference type="EC" id="2.4.2.21" evidence="1"/>
<dbReference type="EMBL" id="CP000446">
    <property type="protein sequence ID" value="ABI37922.1"/>
    <property type="molecule type" value="Genomic_DNA"/>
</dbReference>
<dbReference type="RefSeq" id="WP_011621637.1">
    <property type="nucleotide sequence ID" value="NC_008321.1"/>
</dbReference>
<dbReference type="SMR" id="Q0HLZ5"/>
<dbReference type="KEGG" id="she:Shewmr4_0842"/>
<dbReference type="HOGENOM" id="CLU_002982_0_0_6"/>
<dbReference type="UniPathway" id="UPA00061">
    <property type="reaction ID" value="UER00516"/>
</dbReference>
<dbReference type="GO" id="GO:0008939">
    <property type="term" value="F:nicotinate-nucleotide-dimethylbenzimidazole phosphoribosyltransferase activity"/>
    <property type="evidence" value="ECO:0007669"/>
    <property type="project" value="UniProtKB-UniRule"/>
</dbReference>
<dbReference type="GO" id="GO:0009236">
    <property type="term" value="P:cobalamin biosynthetic process"/>
    <property type="evidence" value="ECO:0007669"/>
    <property type="project" value="UniProtKB-KW"/>
</dbReference>
<dbReference type="CDD" id="cd02439">
    <property type="entry name" value="DMB-PRT_CobT"/>
    <property type="match status" value="1"/>
</dbReference>
<dbReference type="FunFam" id="3.40.50.10210:FF:000001">
    <property type="entry name" value="Nicotinate-nucleotide--dimethylbenzimidazole phosphoribosyltransferase"/>
    <property type="match status" value="1"/>
</dbReference>
<dbReference type="Gene3D" id="1.10.1610.10">
    <property type="match status" value="1"/>
</dbReference>
<dbReference type="Gene3D" id="3.40.50.10210">
    <property type="match status" value="1"/>
</dbReference>
<dbReference type="HAMAP" id="MF_00230">
    <property type="entry name" value="CobT"/>
    <property type="match status" value="1"/>
</dbReference>
<dbReference type="InterPro" id="IPR003200">
    <property type="entry name" value="Nict_dMeBzImd_PRibTrfase"/>
</dbReference>
<dbReference type="InterPro" id="IPR017846">
    <property type="entry name" value="Nict_dMeBzImd_PRibTrfase_bact"/>
</dbReference>
<dbReference type="InterPro" id="IPR023195">
    <property type="entry name" value="Nict_dMeBzImd_PRibTrfase_N"/>
</dbReference>
<dbReference type="InterPro" id="IPR036087">
    <property type="entry name" value="Nict_dMeBzImd_PRibTrfase_sf"/>
</dbReference>
<dbReference type="NCBIfam" id="TIGR03160">
    <property type="entry name" value="cobT_DBIPRT"/>
    <property type="match status" value="1"/>
</dbReference>
<dbReference type="NCBIfam" id="NF000996">
    <property type="entry name" value="PRK00105.1"/>
    <property type="match status" value="1"/>
</dbReference>
<dbReference type="PANTHER" id="PTHR43463">
    <property type="entry name" value="NICOTINATE-NUCLEOTIDE--DIMETHYLBENZIMIDAZOLE PHOSPHORIBOSYLTRANSFERASE"/>
    <property type="match status" value="1"/>
</dbReference>
<dbReference type="PANTHER" id="PTHR43463:SF1">
    <property type="entry name" value="NICOTINATE-NUCLEOTIDE--DIMETHYLBENZIMIDAZOLE PHOSPHORIBOSYLTRANSFERASE"/>
    <property type="match status" value="1"/>
</dbReference>
<dbReference type="Pfam" id="PF02277">
    <property type="entry name" value="DBI_PRT"/>
    <property type="match status" value="1"/>
</dbReference>
<dbReference type="SUPFAM" id="SSF52733">
    <property type="entry name" value="Nicotinate mononucleotide:5,6-dimethylbenzimidazole phosphoribosyltransferase (CobT)"/>
    <property type="match status" value="1"/>
</dbReference>
<sequence>MSQSTLLFQIEPASRAQDQFIQQKIDLKTKPPGALGLLEPLALQIARIQGPKQLEIVNPTMLVFAGDHGIAAEGVSIAPSEVTRQMVQNFAHGGAAINVFCRQLGFNLEVIDCGILTPVEGVEGIIDQRLGAGTGAIHLEPAMSLACVDKGFAMAQALIERHHQAGCNLVAFGEMGIGNTSSAAAIMAAIMQLDVADCVGRGTGISSETLERKQMLIELALLLHQSAMTGPKQVLACLGGFEIVQMTGAMLAAAERKMLVVVDGFIATAAALVAVTINAHVRDYLIFAHRSEEQGHQRMLEHLKAKPLLSLGLRLGEGTGAALALPLIQAAVNFYNQMASFSDAGIEAVV</sequence>
<gene>
    <name evidence="1" type="primary">cobT</name>
    <name type="ordered locus">Shewmr4_0842</name>
</gene>
<reference key="1">
    <citation type="submission" date="2006-08" db="EMBL/GenBank/DDBJ databases">
        <title>Complete sequence of Shewanella sp. MR-4.</title>
        <authorList>
            <consortium name="US DOE Joint Genome Institute"/>
            <person name="Copeland A."/>
            <person name="Lucas S."/>
            <person name="Lapidus A."/>
            <person name="Barry K."/>
            <person name="Detter J.C."/>
            <person name="Glavina del Rio T."/>
            <person name="Hammon N."/>
            <person name="Israni S."/>
            <person name="Dalin E."/>
            <person name="Tice H."/>
            <person name="Pitluck S."/>
            <person name="Kiss H."/>
            <person name="Brettin T."/>
            <person name="Bruce D."/>
            <person name="Han C."/>
            <person name="Tapia R."/>
            <person name="Gilna P."/>
            <person name="Schmutz J."/>
            <person name="Larimer F."/>
            <person name="Land M."/>
            <person name="Hauser L."/>
            <person name="Kyrpides N."/>
            <person name="Mikhailova N."/>
            <person name="Nealson K."/>
            <person name="Konstantinidis K."/>
            <person name="Klappenbach J."/>
            <person name="Tiedje J."/>
            <person name="Richardson P."/>
        </authorList>
    </citation>
    <scope>NUCLEOTIDE SEQUENCE [LARGE SCALE GENOMIC DNA]</scope>
    <source>
        <strain>MR-4</strain>
    </source>
</reference>
<comment type="function">
    <text evidence="1">Catalyzes the synthesis of alpha-ribazole-5'-phosphate from nicotinate mononucleotide (NAMN) and 5,6-dimethylbenzimidazole (DMB).</text>
</comment>
<comment type="catalytic activity">
    <reaction evidence="1">
        <text>5,6-dimethylbenzimidazole + nicotinate beta-D-ribonucleotide = alpha-ribazole 5'-phosphate + nicotinate + H(+)</text>
        <dbReference type="Rhea" id="RHEA:11196"/>
        <dbReference type="ChEBI" id="CHEBI:15378"/>
        <dbReference type="ChEBI" id="CHEBI:15890"/>
        <dbReference type="ChEBI" id="CHEBI:32544"/>
        <dbReference type="ChEBI" id="CHEBI:57502"/>
        <dbReference type="ChEBI" id="CHEBI:57918"/>
        <dbReference type="EC" id="2.4.2.21"/>
    </reaction>
</comment>
<comment type="pathway">
    <text evidence="1">Nucleoside biosynthesis; alpha-ribazole biosynthesis; alpha-ribazole from 5,6-dimethylbenzimidazole: step 1/2.</text>
</comment>
<comment type="similarity">
    <text evidence="1">Belongs to the CobT family.</text>
</comment>
<organism>
    <name type="scientific">Shewanella sp. (strain MR-4)</name>
    <dbReference type="NCBI Taxonomy" id="60480"/>
    <lineage>
        <taxon>Bacteria</taxon>
        <taxon>Pseudomonadati</taxon>
        <taxon>Pseudomonadota</taxon>
        <taxon>Gammaproteobacteria</taxon>
        <taxon>Alteromonadales</taxon>
        <taxon>Shewanellaceae</taxon>
        <taxon>Shewanella</taxon>
    </lineage>
</organism>
<accession>Q0HLZ5</accession>
<keyword id="KW-0169">Cobalamin biosynthesis</keyword>
<keyword id="KW-0328">Glycosyltransferase</keyword>
<keyword id="KW-0808">Transferase</keyword>